<keyword id="KW-0002">3D-structure</keyword>
<keyword id="KW-0106">Calcium</keyword>
<keyword id="KW-1003">Cell membrane</keyword>
<keyword id="KW-0162">Chylomicron</keyword>
<keyword id="KW-0903">Direct protein sequencing</keyword>
<keyword id="KW-1015">Disulfide bond</keyword>
<keyword id="KW-0272">Extracellular matrix</keyword>
<keyword id="KW-0325">Glycoprotein</keyword>
<keyword id="KW-0358">Heparin-binding</keyword>
<keyword id="KW-0378">Hydrolase</keyword>
<keyword id="KW-0442">Lipid degradation</keyword>
<keyword id="KW-0443">Lipid metabolism</keyword>
<keyword id="KW-0472">Membrane</keyword>
<keyword id="KW-0479">Metal-binding</keyword>
<keyword id="KW-0944">Nitration</keyword>
<keyword id="KW-1185">Reference proteome</keyword>
<keyword id="KW-0964">Secreted</keyword>
<keyword id="KW-0732">Signal</keyword>
<keyword id="KW-0850">VLDL</keyword>
<reference key="1">
    <citation type="submission" date="2006-06" db="EMBL/GenBank/DDBJ databases">
        <authorList>
            <consortium name="NIH - Mammalian Gene Collection (MGC) project"/>
        </authorList>
    </citation>
    <scope>NUCLEOTIDE SEQUENCE [LARGE SCALE MRNA]</scope>
    <source>
        <strain>Hereford</strain>
        <tissue>Uterus</tissue>
    </source>
</reference>
<reference key="2">
    <citation type="journal article" date="1987" name="Proc. Natl. Acad. Sci. U.S.A.">
        <title>Molecular cloning and sequence of a cDNA coding for bovine lipoprotein lipase.</title>
        <authorList>
            <person name="Senda M."/>
            <person name="Oka K."/>
            <person name="Brown W.V."/>
            <person name="Qasba P.K."/>
            <person name="Furuichi Y."/>
        </authorList>
    </citation>
    <scope>NUCLEOTIDE SEQUENCE [MRNA] OF 29-478</scope>
    <scope>PARTIAL PROTEIN SEQUENCE</scope>
    <scope>CATALYTIC ACTIVITY</scope>
    <scope>TISSUE SPECIFICITY</scope>
    <scope>HEPARIN BINDING</scope>
</reference>
<reference key="3">
    <citation type="journal article" date="1989" name="J. Biol. Chem.">
        <title>Structure of bovine milk lipoprotein lipase.</title>
        <authorList>
            <person name="Yang C.-Y."/>
            <person name="Gu Z.-W."/>
            <person name="Yang H.-X."/>
            <person name="Rohde M.F."/>
            <person name="Gotto A.M. Jr."/>
            <person name="Pownall H.J."/>
        </authorList>
    </citation>
    <scope>PROTEIN SEQUENCE OF 29-478</scope>
    <scope>GLYCOSYLATION AT ASN-73 AND ASN-389</scope>
    <scope>DISULFIDE BONDS</scope>
    <scope>SUBCELLULAR LOCATION</scope>
    <scope>HEPARIN-BINDING</scope>
    <scope>TISSUE SPECIFICITY</scope>
    <source>
        <tissue>Mammary gland</tissue>
    </source>
</reference>
<reference key="4">
    <citation type="journal article" date="1986" name="Eur. J. Biochem.">
        <title>Lipoprotein lipases from cow, guinea-pig and man. Structural characterization and identification of protease-sensitive internal regions.</title>
        <authorList>
            <person name="Bengtsson-Olivecrona G."/>
            <person name="Olivecrona T."/>
            <person name="Joernvall H."/>
        </authorList>
    </citation>
    <scope>PROTEIN SEQUENCE OF 29-55</scope>
</reference>
<reference key="5">
    <citation type="journal article" date="1990" name="J. Biol. Chem.">
        <title>Metabolism of endothelial cell-bound lipoprotein lipase. Evidence for heparan sulfate proteoglycan-mediated internalization and recycling.</title>
        <authorList>
            <person name="Saxena U."/>
            <person name="Klein M.G."/>
            <person name="Goldberg I.J."/>
        </authorList>
    </citation>
    <scope>HEPARIN BINDING</scope>
    <scope>SUBCELLULAR LOCATION</scope>
    <scope>TISSUE SPECIFICITY</scope>
</reference>
<reference key="6">
    <citation type="journal article" date="1997" name="J. Biol. Chem.">
        <title>Endothelial cell heparanase modulation of lipoprotein lipase activity. Evidence that heparan sulfate oligosaccharide is an extracellular chaperone.</title>
        <authorList>
            <person name="Pillarisetti S."/>
            <person name="Paka L."/>
            <person name="Sasaki A."/>
            <person name="Vanni-Reyes T."/>
            <person name="Yin B."/>
            <person name="Parthasarathy N."/>
            <person name="Wagner W.D."/>
            <person name="Goldberg I.J."/>
        </authorList>
    </citation>
    <scope>FUNCTION</scope>
    <scope>CATALYTIC ACTIVITY</scope>
    <scope>SUBCELLULAR LOCATION</scope>
    <scope>HEPARIN-BINDING</scope>
    <scope>SUBUNIT</scope>
</reference>
<reference key="7">
    <citation type="journal article" date="1998" name="J. Lipid Res.">
        <title>Binding and intracellular trafficking of lipoprotein lipase and triacylglycerol-rich lipoproteins by liver cells.</title>
        <authorList>
            <person name="Casaroli-Marano R.P."/>
            <person name="Garcia R."/>
            <person name="Vilella E."/>
            <person name="Olivecrona G."/>
            <person name="Reina M."/>
            <person name="Vilaro S."/>
        </authorList>
    </citation>
    <scope>SUBCELLULAR LOCATION</scope>
    <scope>TISSUE SPECIFICITY</scope>
</reference>
<reference key="8">
    <citation type="journal article" date="2000" name="Biochemistry">
        <title>Apolipoprotein C-II39-62 activates lipoprotein lipase by direct lipid-independent binding.</title>
        <authorList>
            <person name="MacPhee C.E."/>
            <person name="Hatters D.M."/>
            <person name="Sawyer W.H."/>
            <person name="Howlett G.J."/>
        </authorList>
    </citation>
    <scope>FUNCTION</scope>
    <scope>INTERACTION WITH APOC2</scope>
    <scope>CATALYTIC ACTIVITY</scope>
    <scope>ACTIVITY REGULATION</scope>
</reference>
<reference key="9">
    <citation type="journal article" date="2005" name="J. Biol. Chem.">
        <title>Calcium triggers folding of lipoprotein lipase into active dimers.</title>
        <authorList>
            <person name="Zhang L."/>
            <person name="Lookene A."/>
            <person name="Wu G."/>
            <person name="Olivecrona G."/>
        </authorList>
    </citation>
    <scope>FUNCTION</scope>
    <scope>CATALYTIC ACTIVITY</scope>
    <scope>SUBCELLULAR LOCATION</scope>
    <scope>SUBUNIT</scope>
    <scope>CALCIUM BINDING</scope>
    <scope>ACTIVITY REGULATION</scope>
    <scope>TISSUE SPECIFICITY</scope>
</reference>
<reference key="10">
    <citation type="journal article" date="2016" name="Elife">
        <title>The angiopoietin-like protein ANGPTL4 catalyzes unfolding of the hydrolase domain in lipoprotein lipase and the endothelial membrane protein GPIHBP1 counteracts this unfolding.</title>
        <authorList>
            <person name="Mysling S."/>
            <person name="Kristensen K.K."/>
            <person name="Larsson M."/>
            <person name="Kovrov O."/>
            <person name="Bensadouen A."/>
            <person name="Joergensen T.J."/>
            <person name="Olivecrona G."/>
            <person name="Young S.G."/>
            <person name="Ploug M."/>
        </authorList>
    </citation>
    <scope>CATALYTIC ACTIVITY</scope>
    <scope>ACTIVITY REGULATION</scope>
    <scope>INTERACTION WITH GPIHBP1</scope>
</reference>
<reference key="11">
    <citation type="journal article" date="2018" name="Proc. Natl. Acad. Sci. U.S.A.">
        <title>A disordered acidic domain in GPIHBP1 harboring a sulfated tyrosine regulates lipoprotein lipase.</title>
        <authorList>
            <person name="Kristensen K.K."/>
            <person name="Midtgaard S.R."/>
            <person name="Mysling S."/>
            <person name="Kovrov O."/>
            <person name="Hansen L.B."/>
            <person name="Skar-Gislinge N."/>
            <person name="Beigneux A.P."/>
            <person name="Kragelund B.B."/>
            <person name="Olivecrona G."/>
            <person name="Young S.G."/>
            <person name="Joergensen T.J.D."/>
            <person name="Fong L.G."/>
            <person name="Ploug M."/>
        </authorList>
    </citation>
    <scope>INTERACTION WITH GPIHBP1</scope>
    <scope>TISSUE SPECIFICITY</scope>
    <scope>SUBCELLULAR LOCATION</scope>
</reference>
<comment type="function">
    <text evidence="1 6 7 14">Key enzyme in triglyceride metabolism (PubMed:10727238, PubMed:16179346, PubMed:9188470). Catalyzes the hydrolysis of triglycerides from circulating chylomicrons and very low density lipoproteins (VLDL), and thereby plays an important role in lipid clearance from the blood stream, lipid utilization and storage (PubMed:10727238, PubMed:16179346, PubMed:9188470). Although it has both phospholipase and triglyceride lipase activities it is primarily a triglyceride lipase with low but detectable phospholipase activity (By similarity). Mediates margination of triglyceride-rich lipoprotein particles in capillaries (By similarity). Recruited to its site of action on the luminal surface of vascular endothelium by binding to GPIHBP1 and cell surface heparan sulfate proteoglycans (PubMed:9188470).</text>
</comment>
<comment type="catalytic activity">
    <reaction evidence="6 7 10 11 14">
        <text>a triacylglycerol + H2O = a diacylglycerol + a fatty acid + H(+)</text>
        <dbReference type="Rhea" id="RHEA:12044"/>
        <dbReference type="ChEBI" id="CHEBI:15377"/>
        <dbReference type="ChEBI" id="CHEBI:15378"/>
        <dbReference type="ChEBI" id="CHEBI:17855"/>
        <dbReference type="ChEBI" id="CHEBI:18035"/>
        <dbReference type="ChEBI" id="CHEBI:28868"/>
        <dbReference type="EC" id="3.1.1.34"/>
    </reaction>
</comment>
<comment type="catalytic activity">
    <reaction evidence="1">
        <text>a 1,2-diacyl-sn-glycero-3-phosphocholine + H2O = a 2-acyl-sn-glycero-3-phosphocholine + a fatty acid + H(+)</text>
        <dbReference type="Rhea" id="RHEA:18689"/>
        <dbReference type="ChEBI" id="CHEBI:15377"/>
        <dbReference type="ChEBI" id="CHEBI:15378"/>
        <dbReference type="ChEBI" id="CHEBI:28868"/>
        <dbReference type="ChEBI" id="CHEBI:57643"/>
        <dbReference type="ChEBI" id="CHEBI:57875"/>
        <dbReference type="EC" id="3.1.1.32"/>
    </reaction>
</comment>
<comment type="catalytic activity">
    <reaction evidence="1">
        <text>1,2,3-tri-(9Z-octadecenoyl)-glycerol + H2O = di-(9Z)-octadecenoylglycerol + (9Z)-octadecenoate + H(+)</text>
        <dbReference type="Rhea" id="RHEA:38575"/>
        <dbReference type="ChEBI" id="CHEBI:15377"/>
        <dbReference type="ChEBI" id="CHEBI:15378"/>
        <dbReference type="ChEBI" id="CHEBI:30823"/>
        <dbReference type="ChEBI" id="CHEBI:53753"/>
        <dbReference type="ChEBI" id="CHEBI:75945"/>
    </reaction>
    <physiologicalReaction direction="left-to-right" evidence="1">
        <dbReference type="Rhea" id="RHEA:38576"/>
    </physiologicalReaction>
</comment>
<comment type="catalytic activity">
    <reaction evidence="1">
        <text>1,2-di-(9Z-octadecenoyl)-sn-glycero-3-phosphocholine + H2O = (9Z-octadecenoyl)-sn-glycero-3-phosphocholine + (9Z)-octadecenoate + H(+)</text>
        <dbReference type="Rhea" id="RHEA:38699"/>
        <dbReference type="ChEBI" id="CHEBI:15377"/>
        <dbReference type="ChEBI" id="CHEBI:15378"/>
        <dbReference type="ChEBI" id="CHEBI:30823"/>
        <dbReference type="ChEBI" id="CHEBI:74669"/>
        <dbReference type="ChEBI" id="CHEBI:76083"/>
    </reaction>
    <physiologicalReaction direction="left-to-right" evidence="1">
        <dbReference type="Rhea" id="RHEA:38700"/>
    </physiologicalReaction>
</comment>
<comment type="catalytic activity">
    <reaction evidence="1">
        <text>1,2,3-tributanoylglycerol + H2O = dibutanoylglycerol + butanoate + H(+)</text>
        <dbReference type="Rhea" id="RHEA:40475"/>
        <dbReference type="ChEBI" id="CHEBI:15377"/>
        <dbReference type="ChEBI" id="CHEBI:15378"/>
        <dbReference type="ChEBI" id="CHEBI:17968"/>
        <dbReference type="ChEBI" id="CHEBI:35020"/>
        <dbReference type="ChEBI" id="CHEBI:76478"/>
    </reaction>
    <physiologicalReaction direction="left-to-right" evidence="1">
        <dbReference type="Rhea" id="RHEA:40476"/>
    </physiologicalReaction>
</comment>
<comment type="catalytic activity">
    <reaction evidence="1">
        <text>1,2-dihexadecanoyl-sn-glycero-3-phosphocholine + H2O = hexadecanoyl-sn-glycero-3-phosphocholine + hexadecanoate + H(+)</text>
        <dbReference type="Rhea" id="RHEA:41384"/>
        <dbReference type="ChEBI" id="CHEBI:7896"/>
        <dbReference type="ChEBI" id="CHEBI:15377"/>
        <dbReference type="ChEBI" id="CHEBI:15378"/>
        <dbReference type="ChEBI" id="CHEBI:64563"/>
        <dbReference type="ChEBI" id="CHEBI:72999"/>
    </reaction>
    <physiologicalReaction direction="left-to-right" evidence="1">
        <dbReference type="Rhea" id="RHEA:41385"/>
    </physiologicalReaction>
</comment>
<comment type="activity regulation">
    <text evidence="6 7 10">The apolipoprotein APOC2 acts as a coactivator of LPL activity (PubMed:10727238). Ca(2+) binding promotes protein stability and formation of the active homodimer (PubMed:16179346). Interaction with GPIHBP1 protects LPL against inactivation by ANGPTL4 (PubMed:27929370).</text>
</comment>
<comment type="subunit">
    <text evidence="1 6 7 10 12 14">Homodimer (PubMed:16179346). Interacts with GPIHBP1 with 1:1 stoichiometry (PubMed:27929370, PubMed:29899144). Interacts with APOC2; the interaction activates LPL activity in the presence of lipids (PubMed:10727238). Interaction with heparan sulfate proteoglycans is required to protect LPL against loss of activity (PubMed:9188470). Associates with lipoprotein particles in blood plasma. Interacts with LMF1 and SEL1L; interaction with SEL1L is required to prevent aggregation of newly synthesized LPL in the endoplasmic reticulum (ER), and for normal export of LPL from the ER to the extracellular space (By similarity). Interacts with SORL1; SORL1 acts as a sorting receptor, promoting LPL localization to endosomes and later to lysosomes, leading to degradation of newly synthesized LPL (By similarity).</text>
</comment>
<comment type="interaction">
    <interactant intactId="EBI-8794090">
        <id>P11151</id>
    </interactant>
    <interactant intactId="EBI-1057058">
        <id>Q99523</id>
        <label>SORT1</label>
    </interactant>
    <organismsDiffer>true</organismsDiffer>
    <experiments>6</experiments>
</comment>
<comment type="subcellular location">
    <subcellularLocation>
        <location evidence="8">Cell membrane</location>
        <topology evidence="8">Peripheral membrane protein</topology>
        <orientation evidence="8">Extracellular side</orientation>
    </subcellularLocation>
    <subcellularLocation>
        <location evidence="7 8 9 11 12 14 15">Secreted</location>
    </subcellularLocation>
    <subcellularLocation>
        <location evidence="14">Secreted</location>
        <location evidence="14">Extracellular space</location>
        <location evidence="14">Extracellular matrix</location>
    </subcellularLocation>
    <text evidence="14 15">Newly synthesized LPL binds to cell surface heparan proteoglycans and is then released by heparanase. Subsequently, it becomes attached to heparan proteoglycan on endothelial cells (PubMed:9188470). Locates to the plasma membrane of microvilli of hepatocytes with triglyceride-rich lipoproteins (TRL). Some of the bound LPL is then internalized and located inside non-coated endocytic vesicles (PubMed:9555944).</text>
</comment>
<comment type="tissue specificity">
    <text evidence="7 8 9 11 12 15">Detected in milk (at protein level).</text>
</comment>
<comment type="PTM">
    <text evidence="2">Tyrosine nitration after lipopolysaccharide (LPS) challenge down-regulates the lipase activity.</text>
</comment>
<comment type="similarity">
    <text evidence="16">Belongs to the AB hydrolase superfamily. Lipase family.</text>
</comment>
<evidence type="ECO:0000250" key="1">
    <source>
        <dbReference type="UniProtKB" id="P06858"/>
    </source>
</evidence>
<evidence type="ECO:0000250" key="2">
    <source>
        <dbReference type="UniProtKB" id="Q06000"/>
    </source>
</evidence>
<evidence type="ECO:0000255" key="3"/>
<evidence type="ECO:0000255" key="4">
    <source>
        <dbReference type="PROSITE-ProRule" id="PRU00152"/>
    </source>
</evidence>
<evidence type="ECO:0000255" key="5">
    <source>
        <dbReference type="PROSITE-ProRule" id="PRU10037"/>
    </source>
</evidence>
<evidence type="ECO:0000269" key="6">
    <source>
    </source>
</evidence>
<evidence type="ECO:0000269" key="7">
    <source>
    </source>
</evidence>
<evidence type="ECO:0000269" key="8">
    <source>
    </source>
</evidence>
<evidence type="ECO:0000269" key="9">
    <source>
    </source>
</evidence>
<evidence type="ECO:0000269" key="10">
    <source>
    </source>
</evidence>
<evidence type="ECO:0000269" key="11">
    <source>
    </source>
</evidence>
<evidence type="ECO:0000269" key="12">
    <source>
    </source>
</evidence>
<evidence type="ECO:0000269" key="13">
    <source>
    </source>
</evidence>
<evidence type="ECO:0000269" key="14">
    <source>
    </source>
</evidence>
<evidence type="ECO:0000269" key="15">
    <source>
    </source>
</evidence>
<evidence type="ECO:0000305" key="16"/>
<accession>P11151</accession>
<accession>Q17R03</accession>
<sequence length="478" mass="53378">MESKALLLLALSVCLQSLTVSRGGLVAADRITGGKDFRDIESKFALRTPEDTAEDTCHLIPGVTESVANCHFNHSSKTFVVIHGWTVTGMYESWVPKLVAALYKREPDSNVIVVDWLSRAQQHYPVSAGYTKLVGQDVAKFMNWMADEFNYPLGNVHLLGYSLGAHAAGIAGSLTNKKVNRITGLDPAGPNFEYAEAPSRLSPDDADFVDVLHTFTRGSPGRSIGIQKPVGHVDIYPNGGTFQPGCNIGEALRVIAERGLGDVDQLVKCSHERSVHLFIDSLLNEENPSKAYRCNSKEAFEKGLCLSCRKNRCNNMGYEINKVRAKRSSKMYLKTRSQMPYKVFHYQVKIHFSGTESNTYTNQAFEISLYGTVAESENIPFTLPEVSTNKTYSFLLYTEVDIGELLMLKLKWISDSYFSWSNWWSSPGFDIGKIRVKAGETQKKVIFCSREKMSYLQKGKSPVIFVKCHDKSLNRKSG</sequence>
<proteinExistence type="evidence at protein level"/>
<organism>
    <name type="scientific">Bos taurus</name>
    <name type="common">Bovine</name>
    <dbReference type="NCBI Taxonomy" id="9913"/>
    <lineage>
        <taxon>Eukaryota</taxon>
        <taxon>Metazoa</taxon>
        <taxon>Chordata</taxon>
        <taxon>Craniata</taxon>
        <taxon>Vertebrata</taxon>
        <taxon>Euteleostomi</taxon>
        <taxon>Mammalia</taxon>
        <taxon>Eutheria</taxon>
        <taxon>Laurasiatheria</taxon>
        <taxon>Artiodactyla</taxon>
        <taxon>Ruminantia</taxon>
        <taxon>Pecora</taxon>
        <taxon>Bovidae</taxon>
        <taxon>Bovinae</taxon>
        <taxon>Bos</taxon>
    </lineage>
</organism>
<gene>
    <name type="primary">LPL</name>
</gene>
<protein>
    <recommendedName>
        <fullName>Lipoprotein lipase</fullName>
        <shortName>LPL</shortName>
        <ecNumber evidence="6 7 10 11 14">3.1.1.34</ecNumber>
    </recommendedName>
    <alternativeName>
        <fullName>Phospholipase A1</fullName>
        <ecNumber evidence="1">3.1.1.32</ecNumber>
    </alternativeName>
</protein>
<dbReference type="EC" id="3.1.1.34" evidence="6 7 10 11 14"/>
<dbReference type="EC" id="3.1.1.32" evidence="1"/>
<dbReference type="EMBL" id="BC118091">
    <property type="protein sequence ID" value="AAI18092.1"/>
    <property type="molecule type" value="mRNA"/>
</dbReference>
<dbReference type="EMBL" id="M16966">
    <property type="protein sequence ID" value="AAA30624.1"/>
    <property type="molecule type" value="mRNA"/>
</dbReference>
<dbReference type="PIR" id="A27053">
    <property type="entry name" value="A27053"/>
</dbReference>
<dbReference type="RefSeq" id="NP_001068588.1">
    <property type="nucleotide sequence ID" value="NM_001075120.1"/>
</dbReference>
<dbReference type="PDB" id="6U7M">
    <property type="method" value="EM"/>
    <property type="resolution" value="3.80 A"/>
    <property type="chains" value="A/B/C/D/E/F/G/H/I/J/K/L/M/N/O/P/Q/R/S/T/U/a/b/c/d/e/f/g/h/i=1-478"/>
</dbReference>
<dbReference type="PDB" id="8ERL">
    <property type="method" value="EM"/>
    <property type="resolution" value="3.90 A"/>
    <property type="chains" value="A/B=1-478"/>
</dbReference>
<dbReference type="PDBsum" id="6U7M"/>
<dbReference type="PDBsum" id="8ERL"/>
<dbReference type="EMDB" id="EMD-20673"/>
<dbReference type="EMDB" id="EMD-28554"/>
<dbReference type="SMR" id="P11151"/>
<dbReference type="BioGRID" id="158237">
    <property type="interactions" value="1"/>
</dbReference>
<dbReference type="DIP" id="DIP-61310N"/>
<dbReference type="FunCoup" id="P11151">
    <property type="interactions" value="98"/>
</dbReference>
<dbReference type="IntAct" id="P11151">
    <property type="interactions" value="4"/>
</dbReference>
<dbReference type="STRING" id="9913.ENSBTAP00000017086"/>
<dbReference type="BindingDB" id="P11151"/>
<dbReference type="ChEMBL" id="CHEMBL3064"/>
<dbReference type="ESTHER" id="bovin-lipli">
    <property type="family name" value="Lipoprotein_Lipase"/>
</dbReference>
<dbReference type="GlyCosmos" id="P11151">
    <property type="glycosylation" value="3 sites, No reported glycans"/>
</dbReference>
<dbReference type="GlyGen" id="P11151">
    <property type="glycosylation" value="3 sites"/>
</dbReference>
<dbReference type="iPTMnet" id="P11151"/>
<dbReference type="PaxDb" id="9913-ENSBTAP00000017086"/>
<dbReference type="PeptideAtlas" id="P11151"/>
<dbReference type="ABCD" id="P11151">
    <property type="antibodies" value="1 sequenced antibody"/>
</dbReference>
<dbReference type="Ensembl" id="ENSBTAT00000017086.6">
    <property type="protein sequence ID" value="ENSBTAP00000017086.5"/>
    <property type="gene ID" value="ENSBTAG00000012855.6"/>
</dbReference>
<dbReference type="GeneID" id="280843"/>
<dbReference type="KEGG" id="bta:280843"/>
<dbReference type="CTD" id="4023"/>
<dbReference type="VEuPathDB" id="HostDB:ENSBTAG00000012855"/>
<dbReference type="VGNC" id="VGNC:30969">
    <property type="gene designation" value="LPL"/>
</dbReference>
<dbReference type="eggNOG" id="ENOG502QQ7P">
    <property type="taxonomic scope" value="Eukaryota"/>
</dbReference>
<dbReference type="GeneTree" id="ENSGT00940000157178"/>
<dbReference type="HOGENOM" id="CLU_027171_1_0_1"/>
<dbReference type="InParanoid" id="P11151"/>
<dbReference type="OMA" id="AIFVKCS"/>
<dbReference type="OrthoDB" id="199913at2759"/>
<dbReference type="TreeFam" id="TF324997"/>
<dbReference type="BRENDA" id="3.1.1.34">
    <property type="organism ID" value="908"/>
</dbReference>
<dbReference type="Reactome" id="R-BTA-8963889">
    <property type="pathway name" value="Assembly of active LPL and LIPC lipase complexes"/>
</dbReference>
<dbReference type="Reactome" id="R-BTA-8963901">
    <property type="pathway name" value="Chylomicron remodeling"/>
</dbReference>
<dbReference type="Reactome" id="R-BTA-975634">
    <property type="pathway name" value="Retinoid metabolism and transport"/>
</dbReference>
<dbReference type="PRO" id="PR:P11151"/>
<dbReference type="Proteomes" id="UP000009136">
    <property type="component" value="Chromosome 8"/>
</dbReference>
<dbReference type="Bgee" id="ENSBTAG00000012855">
    <property type="expression patterns" value="Expressed in omental fat pad and 105 other cell types or tissues"/>
</dbReference>
<dbReference type="GO" id="GO:1902494">
    <property type="term" value="C:catalytic complex"/>
    <property type="evidence" value="ECO:0007669"/>
    <property type="project" value="Ensembl"/>
</dbReference>
<dbReference type="GO" id="GO:0009986">
    <property type="term" value="C:cell surface"/>
    <property type="evidence" value="ECO:0007669"/>
    <property type="project" value="Ensembl"/>
</dbReference>
<dbReference type="GO" id="GO:0042627">
    <property type="term" value="C:chylomicron"/>
    <property type="evidence" value="ECO:0007669"/>
    <property type="project" value="UniProtKB-KW"/>
</dbReference>
<dbReference type="GO" id="GO:0005615">
    <property type="term" value="C:extracellular space"/>
    <property type="evidence" value="ECO:0000314"/>
    <property type="project" value="UniProtKB"/>
</dbReference>
<dbReference type="GO" id="GO:0005886">
    <property type="term" value="C:plasma membrane"/>
    <property type="evidence" value="ECO:0007669"/>
    <property type="project" value="UniProtKB-SubCell"/>
</dbReference>
<dbReference type="GO" id="GO:0034361">
    <property type="term" value="C:very-low-density lipoprotein particle"/>
    <property type="evidence" value="ECO:0007669"/>
    <property type="project" value="UniProtKB-KW"/>
</dbReference>
<dbReference type="GO" id="GO:0034185">
    <property type="term" value="F:apolipoprotein binding"/>
    <property type="evidence" value="ECO:0000353"/>
    <property type="project" value="BHF-UCL"/>
</dbReference>
<dbReference type="GO" id="GO:0005509">
    <property type="term" value="F:calcium ion binding"/>
    <property type="evidence" value="ECO:0000314"/>
    <property type="project" value="UniProtKB"/>
</dbReference>
<dbReference type="GO" id="GO:0043395">
    <property type="term" value="F:heparan sulfate proteoglycan binding"/>
    <property type="evidence" value="ECO:0000314"/>
    <property type="project" value="UniProtKB"/>
</dbReference>
<dbReference type="GO" id="GO:0008201">
    <property type="term" value="F:heparin binding"/>
    <property type="evidence" value="ECO:0000250"/>
    <property type="project" value="UniProtKB"/>
</dbReference>
<dbReference type="GO" id="GO:0004465">
    <property type="term" value="F:lipoprotein lipase activity"/>
    <property type="evidence" value="ECO:0000314"/>
    <property type="project" value="UniProtKB"/>
</dbReference>
<dbReference type="GO" id="GO:0071813">
    <property type="term" value="F:lipoprotein particle binding"/>
    <property type="evidence" value="ECO:0000250"/>
    <property type="project" value="UniProtKB"/>
</dbReference>
<dbReference type="GO" id="GO:0008970">
    <property type="term" value="F:phospholipase A1 activity"/>
    <property type="evidence" value="ECO:0000250"/>
    <property type="project" value="UniProtKB"/>
</dbReference>
<dbReference type="GO" id="GO:0004620">
    <property type="term" value="F:phospholipase activity"/>
    <property type="evidence" value="ECO:0000314"/>
    <property type="project" value="BHF-UCL"/>
</dbReference>
<dbReference type="GO" id="GO:0042803">
    <property type="term" value="F:protein homodimerization activity"/>
    <property type="evidence" value="ECO:0000314"/>
    <property type="project" value="UniProtKB"/>
</dbReference>
<dbReference type="GO" id="GO:0005102">
    <property type="term" value="F:signaling receptor binding"/>
    <property type="evidence" value="ECO:0007669"/>
    <property type="project" value="Ensembl"/>
</dbReference>
<dbReference type="GO" id="GO:0004806">
    <property type="term" value="F:triacylglycerol lipase activity"/>
    <property type="evidence" value="ECO:0000314"/>
    <property type="project" value="BHF-UCL"/>
</dbReference>
<dbReference type="GO" id="GO:0071398">
    <property type="term" value="P:cellular response to fatty acid"/>
    <property type="evidence" value="ECO:0007669"/>
    <property type="project" value="Ensembl"/>
</dbReference>
<dbReference type="GO" id="GO:0031670">
    <property type="term" value="P:cellular response to nutrient"/>
    <property type="evidence" value="ECO:0007669"/>
    <property type="project" value="Ensembl"/>
</dbReference>
<dbReference type="GO" id="GO:0042632">
    <property type="term" value="P:cholesterol homeostasis"/>
    <property type="evidence" value="ECO:0000318"/>
    <property type="project" value="GO_Central"/>
</dbReference>
<dbReference type="GO" id="GO:0034371">
    <property type="term" value="P:chylomicron remodeling"/>
    <property type="evidence" value="ECO:0000250"/>
    <property type="project" value="UniProtKB"/>
</dbReference>
<dbReference type="GO" id="GO:0006633">
    <property type="term" value="P:fatty acid biosynthetic process"/>
    <property type="evidence" value="ECO:0000314"/>
    <property type="project" value="BHF-UCL"/>
</dbReference>
<dbReference type="GO" id="GO:0034375">
    <property type="term" value="P:high-density lipoprotein particle remodeling"/>
    <property type="evidence" value="ECO:0000318"/>
    <property type="project" value="GO_Central"/>
</dbReference>
<dbReference type="GO" id="GO:0055096">
    <property type="term" value="P:low-density lipoprotein particle mediated signaling"/>
    <property type="evidence" value="ECO:0007669"/>
    <property type="project" value="Ensembl"/>
</dbReference>
<dbReference type="GO" id="GO:0006644">
    <property type="term" value="P:phospholipid metabolic process"/>
    <property type="evidence" value="ECO:0000314"/>
    <property type="project" value="BHF-UCL"/>
</dbReference>
<dbReference type="GO" id="GO:1904179">
    <property type="term" value="P:positive regulation of adipose tissue development"/>
    <property type="evidence" value="ECO:0007669"/>
    <property type="project" value="Ensembl"/>
</dbReference>
<dbReference type="GO" id="GO:2000343">
    <property type="term" value="P:positive regulation of chemokine (C-X-C motif) ligand 2 production"/>
    <property type="evidence" value="ECO:0007669"/>
    <property type="project" value="Ensembl"/>
</dbReference>
<dbReference type="GO" id="GO:0010886">
    <property type="term" value="P:positive regulation of cholesterol storage"/>
    <property type="evidence" value="ECO:0007669"/>
    <property type="project" value="Ensembl"/>
</dbReference>
<dbReference type="GO" id="GO:0045600">
    <property type="term" value="P:positive regulation of fat cell differentiation"/>
    <property type="evidence" value="ECO:0007669"/>
    <property type="project" value="Ensembl"/>
</dbReference>
<dbReference type="GO" id="GO:0050729">
    <property type="term" value="P:positive regulation of inflammatory response"/>
    <property type="evidence" value="ECO:0007669"/>
    <property type="project" value="Ensembl"/>
</dbReference>
<dbReference type="GO" id="GO:0032731">
    <property type="term" value="P:positive regulation of interleukin-1 beta production"/>
    <property type="evidence" value="ECO:0007669"/>
    <property type="project" value="Ensembl"/>
</dbReference>
<dbReference type="GO" id="GO:0032755">
    <property type="term" value="P:positive regulation of interleukin-6 production"/>
    <property type="evidence" value="ECO:0007669"/>
    <property type="project" value="Ensembl"/>
</dbReference>
<dbReference type="GO" id="GO:0010744">
    <property type="term" value="P:positive regulation of macrophage derived foam cell differentiation"/>
    <property type="evidence" value="ECO:0007669"/>
    <property type="project" value="Ensembl"/>
</dbReference>
<dbReference type="GO" id="GO:0032760">
    <property type="term" value="P:positive regulation of tumor necrosis factor production"/>
    <property type="evidence" value="ECO:0007669"/>
    <property type="project" value="Ensembl"/>
</dbReference>
<dbReference type="GO" id="GO:0009617">
    <property type="term" value="P:response to bacterium"/>
    <property type="evidence" value="ECO:0007669"/>
    <property type="project" value="Ensembl"/>
</dbReference>
<dbReference type="GO" id="GO:0009749">
    <property type="term" value="P:response to glucose"/>
    <property type="evidence" value="ECO:0000314"/>
    <property type="project" value="AgBase"/>
</dbReference>
<dbReference type="GO" id="GO:0001523">
    <property type="term" value="P:retinoid metabolic process"/>
    <property type="evidence" value="ECO:0007669"/>
    <property type="project" value="Ensembl"/>
</dbReference>
<dbReference type="GO" id="GO:0019433">
    <property type="term" value="P:triglyceride catabolic process"/>
    <property type="evidence" value="ECO:0000314"/>
    <property type="project" value="UniProtKB"/>
</dbReference>
<dbReference type="GO" id="GO:0070328">
    <property type="term" value="P:triglyceride homeostasis"/>
    <property type="evidence" value="ECO:0007669"/>
    <property type="project" value="Ensembl"/>
</dbReference>
<dbReference type="GO" id="GO:0006641">
    <property type="term" value="P:triglyceride metabolic process"/>
    <property type="evidence" value="ECO:0000314"/>
    <property type="project" value="BHF-UCL"/>
</dbReference>
<dbReference type="GO" id="GO:0034447">
    <property type="term" value="P:very-low-density lipoprotein particle clearance"/>
    <property type="evidence" value="ECO:0007669"/>
    <property type="project" value="Ensembl"/>
</dbReference>
<dbReference type="GO" id="GO:0034372">
    <property type="term" value="P:very-low-density lipoprotein particle remodeling"/>
    <property type="evidence" value="ECO:0000314"/>
    <property type="project" value="BHF-UCL"/>
</dbReference>
<dbReference type="CDD" id="cd00707">
    <property type="entry name" value="Pancreat_lipase_like"/>
    <property type="match status" value="1"/>
</dbReference>
<dbReference type="CDD" id="cd01758">
    <property type="entry name" value="PLAT_LPL"/>
    <property type="match status" value="1"/>
</dbReference>
<dbReference type="FunFam" id="2.60.60.20:FF:000006">
    <property type="entry name" value="Lipoprotein lipase"/>
    <property type="match status" value="1"/>
</dbReference>
<dbReference type="FunFam" id="3.40.50.1820:FF:000031">
    <property type="entry name" value="Lipoprotein lipase"/>
    <property type="match status" value="1"/>
</dbReference>
<dbReference type="Gene3D" id="3.40.50.1820">
    <property type="entry name" value="alpha/beta hydrolase"/>
    <property type="match status" value="1"/>
</dbReference>
<dbReference type="Gene3D" id="2.60.60.20">
    <property type="entry name" value="PLAT/LH2 domain"/>
    <property type="match status" value="1"/>
</dbReference>
<dbReference type="InterPro" id="IPR029058">
    <property type="entry name" value="AB_hydrolase_fold"/>
</dbReference>
<dbReference type="InterPro" id="IPR013818">
    <property type="entry name" value="Lipase"/>
</dbReference>
<dbReference type="InterPro" id="IPR016272">
    <property type="entry name" value="Lipase_LIPH"/>
</dbReference>
<dbReference type="InterPro" id="IPR033906">
    <property type="entry name" value="Lipase_N"/>
</dbReference>
<dbReference type="InterPro" id="IPR002330">
    <property type="entry name" value="Lipo_Lipase"/>
</dbReference>
<dbReference type="InterPro" id="IPR001024">
    <property type="entry name" value="PLAT/LH2_dom"/>
</dbReference>
<dbReference type="InterPro" id="IPR036392">
    <property type="entry name" value="PLAT/LH2_dom_sf"/>
</dbReference>
<dbReference type="InterPro" id="IPR000734">
    <property type="entry name" value="TAG_lipase"/>
</dbReference>
<dbReference type="NCBIfam" id="TIGR03230">
    <property type="entry name" value="lipo_lipase"/>
    <property type="match status" value="1"/>
</dbReference>
<dbReference type="PANTHER" id="PTHR11610">
    <property type="entry name" value="LIPASE"/>
    <property type="match status" value="1"/>
</dbReference>
<dbReference type="PANTHER" id="PTHR11610:SF3">
    <property type="entry name" value="LIPOPROTEIN LIPASE"/>
    <property type="match status" value="1"/>
</dbReference>
<dbReference type="Pfam" id="PF00151">
    <property type="entry name" value="Lipase"/>
    <property type="match status" value="1"/>
</dbReference>
<dbReference type="Pfam" id="PF01477">
    <property type="entry name" value="PLAT"/>
    <property type="match status" value="1"/>
</dbReference>
<dbReference type="PIRSF" id="PIRSF000865">
    <property type="entry name" value="Lipoprotein_lipase_LIPH"/>
    <property type="match status" value="1"/>
</dbReference>
<dbReference type="PRINTS" id="PR00822">
    <property type="entry name" value="LIPOLIPASE"/>
</dbReference>
<dbReference type="PRINTS" id="PR00821">
    <property type="entry name" value="TAGLIPASE"/>
</dbReference>
<dbReference type="SMART" id="SM00308">
    <property type="entry name" value="LH2"/>
    <property type="match status" value="1"/>
</dbReference>
<dbReference type="SUPFAM" id="SSF53474">
    <property type="entry name" value="alpha/beta-Hydrolases"/>
    <property type="match status" value="1"/>
</dbReference>
<dbReference type="SUPFAM" id="SSF49723">
    <property type="entry name" value="Lipase/lipooxygenase domain (PLAT/LH2 domain)"/>
    <property type="match status" value="1"/>
</dbReference>
<dbReference type="PROSITE" id="PS00120">
    <property type="entry name" value="LIPASE_SER"/>
    <property type="match status" value="1"/>
</dbReference>
<dbReference type="PROSITE" id="PS50095">
    <property type="entry name" value="PLAT"/>
    <property type="match status" value="1"/>
</dbReference>
<feature type="signal peptide" evidence="9 11 13">
    <location>
        <begin position="1"/>
        <end position="28"/>
    </location>
</feature>
<feature type="chain" id="PRO_0000017772" description="Lipoprotein lipase">
    <location>
        <begin position="29"/>
        <end position="478"/>
    </location>
</feature>
<feature type="domain" description="PLAT" evidence="4">
    <location>
        <begin position="344"/>
        <end position="467"/>
    </location>
</feature>
<feature type="region of interest" description="Interaction with GPIHBP1" evidence="1">
    <location>
        <begin position="35"/>
        <end position="56"/>
    </location>
</feature>
<feature type="region of interest" description="Essential for determining substrate specificity" evidence="1">
    <location>
        <begin position="246"/>
        <end position="269"/>
    </location>
</feature>
<feature type="region of interest" description="Important for interaction with lipoprotein particles" evidence="1">
    <location>
        <begin position="420"/>
        <end position="424"/>
    </location>
</feature>
<feature type="region of interest" description="Important for heparin binding" evidence="1">
    <location>
        <begin position="433"/>
        <end position="437"/>
    </location>
</feature>
<feature type="region of interest" description="Interaction with GPIHBP1" evidence="1">
    <location>
        <begin position="446"/>
        <end position="470"/>
    </location>
</feature>
<feature type="active site" description="Nucleophile" evidence="1">
    <location>
        <position position="162"/>
    </location>
</feature>
<feature type="active site" description="Charge relay system" evidence="5">
    <location>
        <position position="186"/>
    </location>
</feature>
<feature type="active site" description="Charge relay system" evidence="5">
    <location>
        <position position="271"/>
    </location>
</feature>
<feature type="binding site" evidence="1">
    <location>
        <position position="197"/>
    </location>
    <ligand>
        <name>Ca(2+)</name>
        <dbReference type="ChEBI" id="CHEBI:29108"/>
    </ligand>
</feature>
<feature type="binding site" evidence="1">
    <location>
        <position position="200"/>
    </location>
    <ligand>
        <name>Ca(2+)</name>
        <dbReference type="ChEBI" id="CHEBI:29108"/>
    </ligand>
</feature>
<feature type="binding site" evidence="1">
    <location>
        <position position="202"/>
    </location>
    <ligand>
        <name>Ca(2+)</name>
        <dbReference type="ChEBI" id="CHEBI:29108"/>
    </ligand>
</feature>
<feature type="binding site" evidence="1">
    <location>
        <position position="205"/>
    </location>
    <ligand>
        <name>Ca(2+)</name>
        <dbReference type="ChEBI" id="CHEBI:29108"/>
    </ligand>
</feature>
<feature type="modified residue" description="3'-nitrotyrosine" evidence="2">
    <location>
        <position position="124"/>
    </location>
</feature>
<feature type="modified residue" description="3'-nitrotyrosine" evidence="2">
    <location>
        <position position="194"/>
    </location>
</feature>
<feature type="modified residue" description="3'-nitrotyrosine" evidence="2">
    <location>
        <position position="346"/>
    </location>
</feature>
<feature type="glycosylation site" description="N-linked (GlcNAc...) asparagine" evidence="9">
    <location>
        <position position="73"/>
    </location>
</feature>
<feature type="glycosylation site" description="N-linked (GlcNAc...) asparagine" evidence="3">
    <location>
        <position position="287"/>
    </location>
</feature>
<feature type="glycosylation site" description="N-linked (GlcNAc...) asparagine" evidence="9">
    <location>
        <position position="389"/>
    </location>
</feature>
<feature type="disulfide bond" evidence="4 9">
    <location>
        <begin position="57"/>
        <end position="70"/>
    </location>
</feature>
<feature type="disulfide bond" evidence="4 9">
    <location>
        <begin position="246"/>
        <end position="269"/>
    </location>
</feature>
<feature type="disulfide bond" evidence="4 9">
    <location>
        <begin position="294"/>
        <end position="313"/>
    </location>
</feature>
<feature type="disulfide bond" evidence="4 9">
    <location>
        <begin position="305"/>
        <end position="308"/>
    </location>
</feature>
<feature type="disulfide bond" evidence="4 9">
    <location>
        <begin position="448"/>
        <end position="468"/>
    </location>
</feature>
<name>LIPL_BOVIN</name>